<dbReference type="EC" id="3.1.11.2" evidence="2"/>
<dbReference type="EC" id="3.1.21.-" evidence="5"/>
<dbReference type="EMBL" id="EF041101">
    <property type="protein sequence ID" value="ABK35081.1"/>
    <property type="molecule type" value="mRNA"/>
</dbReference>
<dbReference type="EMBL" id="EF041102">
    <property type="protein sequence ID" value="ABK35082.1"/>
    <property type="molecule type" value="mRNA"/>
</dbReference>
<dbReference type="EMBL" id="EF041103">
    <property type="protein sequence ID" value="ABK35083.1"/>
    <property type="molecule type" value="Genomic_DNA"/>
</dbReference>
<dbReference type="EMBL" id="EF041104">
    <property type="protein sequence ID" value="ABK35084.1"/>
    <property type="molecule type" value="Genomic_DNA"/>
</dbReference>
<dbReference type="EMBL" id="BX323558">
    <property type="protein sequence ID" value="CAI11781.1"/>
    <property type="molecule type" value="Genomic_DNA"/>
</dbReference>
<dbReference type="EMBL" id="BC055545">
    <property type="protein sequence ID" value="AAH55545.1"/>
    <property type="molecule type" value="mRNA"/>
</dbReference>
<dbReference type="EMBL" id="BC097053">
    <property type="protein sequence ID" value="AAH97053.1"/>
    <property type="molecule type" value="mRNA"/>
</dbReference>
<dbReference type="EMBL" id="BC164240">
    <property type="protein sequence ID" value="AAI64240.1"/>
    <property type="molecule type" value="mRNA"/>
</dbReference>
<dbReference type="PDB" id="2O3C">
    <property type="method" value="X-ray"/>
    <property type="resolution" value="2.30 A"/>
    <property type="chains" value="A/B/C=33-310"/>
</dbReference>
<dbReference type="PDBsum" id="2O3C"/>
<dbReference type="SMR" id="A0MTA1"/>
<dbReference type="FunCoup" id="A0MTA1">
    <property type="interactions" value="1448"/>
</dbReference>
<dbReference type="STRING" id="7955.ENSDARP00000067373"/>
<dbReference type="PaxDb" id="7955-ENSDARP00000067373"/>
<dbReference type="PeptideAtlas" id="A0MTA1"/>
<dbReference type="AGR" id="ZFIN:ZDB-GENE-040426-2761"/>
<dbReference type="ZFIN" id="ZDB-GENE-040426-2761">
    <property type="gene designation" value="apex1"/>
</dbReference>
<dbReference type="eggNOG" id="KOG1294">
    <property type="taxonomic scope" value="Eukaryota"/>
</dbReference>
<dbReference type="InParanoid" id="A0MTA1"/>
<dbReference type="OrthoDB" id="498125at2759"/>
<dbReference type="PhylomeDB" id="A0MTA1"/>
<dbReference type="TreeFam" id="TF315048"/>
<dbReference type="Reactome" id="R-DRE-110357">
    <property type="pathway name" value="Displacement of DNA glycosylase by APEX1"/>
</dbReference>
<dbReference type="Reactome" id="R-DRE-110362">
    <property type="pathway name" value="POLB-Dependent Long Patch Base Excision Repair"/>
</dbReference>
<dbReference type="Reactome" id="R-DRE-110373">
    <property type="pathway name" value="Resolution of AP sites via the multiple-nucleotide patch replacement pathway"/>
</dbReference>
<dbReference type="Reactome" id="R-DRE-73930">
    <property type="pathway name" value="Abasic sugar-phosphate removal via the single-nucleotide replacement pathway"/>
</dbReference>
<dbReference type="Reactome" id="R-DRE-73933">
    <property type="pathway name" value="Resolution of Abasic Sites (AP sites)"/>
</dbReference>
<dbReference type="EvolutionaryTrace" id="A0MTA1"/>
<dbReference type="PRO" id="PR:A0MTA1"/>
<dbReference type="Proteomes" id="UP000000437">
    <property type="component" value="Unplaced"/>
</dbReference>
<dbReference type="GO" id="GO:0005783">
    <property type="term" value="C:endoplasmic reticulum"/>
    <property type="evidence" value="ECO:0007669"/>
    <property type="project" value="UniProtKB-SubCell"/>
</dbReference>
<dbReference type="GO" id="GO:0005739">
    <property type="term" value="C:mitochondrion"/>
    <property type="evidence" value="ECO:0007669"/>
    <property type="project" value="UniProtKB-SubCell"/>
</dbReference>
<dbReference type="GO" id="GO:0016607">
    <property type="term" value="C:nuclear speck"/>
    <property type="evidence" value="ECO:0007669"/>
    <property type="project" value="UniProtKB-SubCell"/>
</dbReference>
<dbReference type="GO" id="GO:0005730">
    <property type="term" value="C:nucleolus"/>
    <property type="evidence" value="ECO:0007669"/>
    <property type="project" value="UniProtKB-SubCell"/>
</dbReference>
<dbReference type="GO" id="GO:0005634">
    <property type="term" value="C:nucleus"/>
    <property type="evidence" value="ECO:0000318"/>
    <property type="project" value="GO_Central"/>
</dbReference>
<dbReference type="GO" id="GO:0052720">
    <property type="term" value="F:class II DNA-(apurinic or apyrimidinic site) endonuclease activity"/>
    <property type="evidence" value="ECO:0000250"/>
    <property type="project" value="UniProtKB"/>
</dbReference>
<dbReference type="GO" id="GO:0140431">
    <property type="term" value="F:DNA-(abasic site) binding"/>
    <property type="evidence" value="ECO:0000250"/>
    <property type="project" value="UniProtKB"/>
</dbReference>
<dbReference type="GO" id="GO:0003906">
    <property type="term" value="F:DNA-(apurinic or apyrimidinic site) endonuclease activity"/>
    <property type="evidence" value="ECO:0000314"/>
    <property type="project" value="ZFIN"/>
</dbReference>
<dbReference type="GO" id="GO:0008311">
    <property type="term" value="F:double-stranded DNA 3'-5' DNA exonuclease activity"/>
    <property type="evidence" value="ECO:0000318"/>
    <property type="project" value="GO_Central"/>
</dbReference>
<dbReference type="GO" id="GO:0046872">
    <property type="term" value="F:metal ion binding"/>
    <property type="evidence" value="ECO:0007669"/>
    <property type="project" value="UniProtKB-KW"/>
</dbReference>
<dbReference type="GO" id="GO:0008081">
    <property type="term" value="F:phosphoric diester hydrolase activity"/>
    <property type="evidence" value="ECO:0000318"/>
    <property type="project" value="GO_Central"/>
</dbReference>
<dbReference type="GO" id="GO:0003723">
    <property type="term" value="F:RNA binding"/>
    <property type="evidence" value="ECO:0007669"/>
    <property type="project" value="UniProtKB-KW"/>
</dbReference>
<dbReference type="GO" id="GO:0006284">
    <property type="term" value="P:base-excision repair"/>
    <property type="evidence" value="ECO:0000318"/>
    <property type="project" value="GO_Central"/>
</dbReference>
<dbReference type="GO" id="GO:0060047">
    <property type="term" value="P:heart contraction"/>
    <property type="evidence" value="ECO:0000315"/>
    <property type="project" value="ZFIN"/>
</dbReference>
<dbReference type="GO" id="GO:0001947">
    <property type="term" value="P:heart looping"/>
    <property type="evidence" value="ECO:0000315"/>
    <property type="project" value="ZFIN"/>
</dbReference>
<dbReference type="GO" id="GO:0043066">
    <property type="term" value="P:negative regulation of apoptotic process"/>
    <property type="evidence" value="ECO:0000315"/>
    <property type="project" value="ZFIN"/>
</dbReference>
<dbReference type="GO" id="GO:0010628">
    <property type="term" value="P:positive regulation of gene expression"/>
    <property type="evidence" value="ECO:0000315"/>
    <property type="project" value="ZFIN"/>
</dbReference>
<dbReference type="GO" id="GO:0044029">
    <property type="term" value="P:positive regulation of gene expression via chromosomal CpG island demethylation"/>
    <property type="evidence" value="ECO:0000250"/>
    <property type="project" value="UniProtKB"/>
</dbReference>
<dbReference type="CDD" id="cd09087">
    <property type="entry name" value="Ape1-like_AP-endo"/>
    <property type="match status" value="1"/>
</dbReference>
<dbReference type="FunFam" id="3.60.10.10:FF:000009">
    <property type="entry name" value="DNA-(apurinic or apyrimidinic site) lyase"/>
    <property type="match status" value="1"/>
</dbReference>
<dbReference type="Gene3D" id="3.60.10.10">
    <property type="entry name" value="Endonuclease/exonuclease/phosphatase"/>
    <property type="match status" value="1"/>
</dbReference>
<dbReference type="InterPro" id="IPR004808">
    <property type="entry name" value="AP_endonuc_1"/>
</dbReference>
<dbReference type="InterPro" id="IPR020847">
    <property type="entry name" value="AP_endonuclease_F1_BS"/>
</dbReference>
<dbReference type="InterPro" id="IPR020848">
    <property type="entry name" value="AP_endonuclease_F1_CS"/>
</dbReference>
<dbReference type="InterPro" id="IPR036691">
    <property type="entry name" value="Endo/exonu/phosph_ase_sf"/>
</dbReference>
<dbReference type="InterPro" id="IPR005135">
    <property type="entry name" value="Endo/exonuclease/phosphatase"/>
</dbReference>
<dbReference type="NCBIfam" id="TIGR00195">
    <property type="entry name" value="exoDNase_III"/>
    <property type="match status" value="1"/>
</dbReference>
<dbReference type="NCBIfam" id="TIGR00633">
    <property type="entry name" value="xth"/>
    <property type="match status" value="1"/>
</dbReference>
<dbReference type="PANTHER" id="PTHR22748">
    <property type="entry name" value="AP ENDONUCLEASE"/>
    <property type="match status" value="1"/>
</dbReference>
<dbReference type="PANTHER" id="PTHR22748:SF6">
    <property type="entry name" value="DNA-(APURINIC OR APYRIMIDINIC SITE) ENDONUCLEASE"/>
    <property type="match status" value="1"/>
</dbReference>
<dbReference type="Pfam" id="PF03372">
    <property type="entry name" value="Exo_endo_phos"/>
    <property type="match status" value="1"/>
</dbReference>
<dbReference type="SUPFAM" id="SSF56219">
    <property type="entry name" value="DNase I-like"/>
    <property type="match status" value="1"/>
</dbReference>
<dbReference type="PROSITE" id="PS00726">
    <property type="entry name" value="AP_NUCLEASE_F1_1"/>
    <property type="match status" value="1"/>
</dbReference>
<dbReference type="PROSITE" id="PS00728">
    <property type="entry name" value="AP_NUCLEASE_F1_3"/>
    <property type="match status" value="1"/>
</dbReference>
<dbReference type="PROSITE" id="PS51435">
    <property type="entry name" value="AP_NUCLEASE_F1_4"/>
    <property type="match status" value="1"/>
</dbReference>
<gene>
    <name type="primary">apex1</name>
    <name type="synonym">apex1a</name>
    <name type="synonym">apex1b</name>
    <name type="ORF">si:ch211-214j24.12</name>
    <name type="ORF">zgc:66204</name>
</gene>
<keyword id="KW-0002">3D-structure</keyword>
<keyword id="KW-0963">Cytoplasm</keyword>
<keyword id="KW-0227">DNA damage</keyword>
<keyword id="KW-0234">DNA repair</keyword>
<keyword id="KW-0238">DNA-binding</keyword>
<keyword id="KW-0255">Endonuclease</keyword>
<keyword id="KW-0256">Endoplasmic reticulum</keyword>
<keyword id="KW-0378">Hydrolase</keyword>
<keyword id="KW-0460">Magnesium</keyword>
<keyword id="KW-0479">Metal-binding</keyword>
<keyword id="KW-0496">Mitochondrion</keyword>
<keyword id="KW-0540">Nuclease</keyword>
<keyword id="KW-0539">Nucleus</keyword>
<keyword id="KW-1185">Reference proteome</keyword>
<keyword id="KW-0694">RNA-binding</keyword>
<organism>
    <name type="scientific">Danio rerio</name>
    <name type="common">Zebrafish</name>
    <name type="synonym">Brachydanio rerio</name>
    <dbReference type="NCBI Taxonomy" id="7955"/>
    <lineage>
        <taxon>Eukaryota</taxon>
        <taxon>Metazoa</taxon>
        <taxon>Chordata</taxon>
        <taxon>Craniata</taxon>
        <taxon>Vertebrata</taxon>
        <taxon>Euteleostomi</taxon>
        <taxon>Actinopterygii</taxon>
        <taxon>Neopterygii</taxon>
        <taxon>Teleostei</taxon>
        <taxon>Ostariophysi</taxon>
        <taxon>Cypriniformes</taxon>
        <taxon>Danionidae</taxon>
        <taxon>Danioninae</taxon>
        <taxon>Danio</taxon>
    </lineage>
</organism>
<sequence>MPKRAKKNEEGVDGEADNGTAAAKKEKKGKEPEAPILYEDPPEKLTSKDGRAANMKITSWNVDGLRAWVKKNGLDWVRKEDPDILCLQETKCAEKALPADITGMPEYPHKYWAGSEDKEGYSGVAMLCKTEPLNVTYGIGKEEHDKEGRVITAEFPDFFLVTAYVPNASRGLVRLDYRKTWDVDFRAYLCGLDARKPLVLCGDLNVAHQEIDLKNPKGNRKNAGFTPEEREGFTQLLEAGFTDSFRELYPDQAYAYTFWTYMMNARSKNVGWRLDYFVLSSALLPGLCDSKIRNTAMGSDHCPITLFLAV</sequence>
<feature type="chain" id="PRO_0000402575" description="DNA repair nuclease APEX1">
    <location>
        <begin position="1"/>
        <end position="310"/>
    </location>
</feature>
<feature type="region of interest" description="Disordered" evidence="4">
    <location>
        <begin position="1"/>
        <end position="51"/>
    </location>
</feature>
<feature type="compositionally biased region" description="Basic and acidic residues" evidence="4">
    <location>
        <begin position="41"/>
        <end position="51"/>
    </location>
</feature>
<feature type="active site" evidence="1">
    <location>
        <position position="164"/>
    </location>
</feature>
<feature type="active site" description="Proton donor/acceptor" evidence="1">
    <location>
        <position position="203"/>
    </location>
</feature>
<feature type="binding site" evidence="1">
    <location>
        <position position="63"/>
    </location>
    <ligand>
        <name>Mg(2+)</name>
        <dbReference type="ChEBI" id="CHEBI:18420"/>
        <label>1</label>
    </ligand>
</feature>
<feature type="binding site" evidence="1">
    <location>
        <position position="89"/>
    </location>
    <ligand>
        <name>Mg(2+)</name>
        <dbReference type="ChEBI" id="CHEBI:18420"/>
        <label>1</label>
    </ligand>
</feature>
<feature type="binding site" evidence="1">
    <location>
        <position position="203"/>
    </location>
    <ligand>
        <name>Mg(2+)</name>
        <dbReference type="ChEBI" id="CHEBI:18420"/>
        <label>2</label>
    </ligand>
</feature>
<feature type="binding site" evidence="1">
    <location>
        <position position="205"/>
    </location>
    <ligand>
        <name>Mg(2+)</name>
        <dbReference type="ChEBI" id="CHEBI:18420"/>
        <label>2</label>
    </ligand>
</feature>
<feature type="binding site" evidence="1">
    <location>
        <position position="300"/>
    </location>
    <ligand>
        <name>Mg(2+)</name>
        <dbReference type="ChEBI" id="CHEBI:18420"/>
        <label>1</label>
    </ligand>
</feature>
<feature type="site" description="Transition state stabilizer" evidence="1">
    <location>
        <position position="205"/>
    </location>
</feature>
<feature type="site" description="Important for catalytic activity" evidence="1">
    <location>
        <position position="275"/>
    </location>
</feature>
<feature type="site" description="Interaction with DNA substrate" evidence="1">
    <location>
        <position position="301"/>
    </location>
</feature>
<feature type="mutagenesis site" description="Confers redox activity." evidence="6">
    <original>T</original>
    <variation>C</variation>
    <location>
        <position position="58"/>
    </location>
</feature>
<feature type="sequence conflict" description="In Ref. 2; CAI11781." evidence="7" ref="2">
    <original>A</original>
    <variation>S</variation>
    <location>
        <position position="16"/>
    </location>
</feature>
<feature type="sequence conflict" description="In Ref. 3; AAI64240/AAH97053." evidence="7" ref="3">
    <location>
        <begin position="80"/>
        <end position="93"/>
    </location>
</feature>
<feature type="sequence conflict" description="In Ref. 3; AAH55545." evidence="7" ref="3">
    <original>G</original>
    <variation>A</variation>
    <location>
        <position position="103"/>
    </location>
</feature>
<feature type="strand" evidence="8">
    <location>
        <begin position="55"/>
        <end position="61"/>
    </location>
</feature>
<feature type="helix" evidence="8">
    <location>
        <begin position="65"/>
        <end position="70"/>
    </location>
</feature>
<feature type="helix" evidence="8">
    <location>
        <begin position="73"/>
        <end position="80"/>
    </location>
</feature>
<feature type="strand" evidence="8">
    <location>
        <begin position="83"/>
        <end position="88"/>
    </location>
</feature>
<feature type="helix" evidence="8">
    <location>
        <begin position="94"/>
        <end position="96"/>
    </location>
</feature>
<feature type="helix" evidence="8">
    <location>
        <begin position="99"/>
        <end position="102"/>
    </location>
</feature>
<feature type="strand" evidence="8">
    <location>
        <begin position="108"/>
        <end position="113"/>
    </location>
</feature>
<feature type="strand" evidence="8">
    <location>
        <begin position="124"/>
        <end position="130"/>
    </location>
</feature>
<feature type="strand" evidence="8">
    <location>
        <begin position="133"/>
        <end position="138"/>
    </location>
</feature>
<feature type="turn" evidence="8">
    <location>
        <begin position="142"/>
        <end position="146"/>
    </location>
</feature>
<feature type="strand" evidence="8">
    <location>
        <begin position="150"/>
        <end position="154"/>
    </location>
</feature>
<feature type="strand" evidence="8">
    <location>
        <begin position="159"/>
        <end position="164"/>
    </location>
</feature>
<feature type="helix" evidence="8">
    <location>
        <begin position="170"/>
        <end position="172"/>
    </location>
</feature>
<feature type="helix" evidence="8">
    <location>
        <begin position="175"/>
        <end position="195"/>
    </location>
</feature>
<feature type="strand" evidence="8">
    <location>
        <begin position="198"/>
        <end position="203"/>
    </location>
</feature>
<feature type="helix" evidence="8">
    <location>
        <begin position="210"/>
        <end position="212"/>
    </location>
</feature>
<feature type="helix" evidence="8">
    <location>
        <begin position="216"/>
        <end position="219"/>
    </location>
</feature>
<feature type="helix" evidence="8">
    <location>
        <begin position="227"/>
        <end position="238"/>
    </location>
</feature>
<feature type="strand" evidence="8">
    <location>
        <begin position="241"/>
        <end position="243"/>
    </location>
</feature>
<feature type="helix" evidence="8">
    <location>
        <begin position="244"/>
        <end position="248"/>
    </location>
</feature>
<feature type="helix" evidence="8">
    <location>
        <begin position="262"/>
        <end position="264"/>
    </location>
</feature>
<feature type="helix" evidence="8">
    <location>
        <begin position="265"/>
        <end position="268"/>
    </location>
</feature>
<feature type="strand" evidence="8">
    <location>
        <begin position="275"/>
        <end position="280"/>
    </location>
</feature>
<feature type="helix" evidence="8">
    <location>
        <begin position="281"/>
        <end position="286"/>
    </location>
</feature>
<feature type="strand" evidence="8">
    <location>
        <begin position="287"/>
        <end position="292"/>
    </location>
</feature>
<feature type="strand" evidence="8">
    <location>
        <begin position="298"/>
        <end position="301"/>
    </location>
</feature>
<feature type="strand" evidence="8">
    <location>
        <begin position="304"/>
        <end position="308"/>
    </location>
</feature>
<accession>A0MTA1</accession>
<accession>Q4V955</accession>
<accession>Q5RHZ7</accession>
<accession>Q7SXL6</accession>
<evidence type="ECO:0000250" key="1"/>
<evidence type="ECO:0000250" key="2">
    <source>
        <dbReference type="UniProtKB" id="P27695"/>
    </source>
</evidence>
<evidence type="ECO:0000255" key="3">
    <source>
        <dbReference type="PROSITE-ProRule" id="PRU00764"/>
    </source>
</evidence>
<evidence type="ECO:0000256" key="4">
    <source>
        <dbReference type="SAM" id="MobiDB-lite"/>
    </source>
</evidence>
<evidence type="ECO:0000269" key="5">
    <source>
    </source>
</evidence>
<evidence type="ECO:0000269" key="6">
    <source>
    </source>
</evidence>
<evidence type="ECO:0000305" key="7"/>
<evidence type="ECO:0007829" key="8">
    <source>
        <dbReference type="PDB" id="2O3C"/>
    </source>
</evidence>
<name>APEX1_DANRE</name>
<reference key="1">
    <citation type="journal article" date="2006" name="Mol. Cell. Biol.">
        <title>DNA repair protein involved in heart and blood development.</title>
        <authorList>
            <person name="Wang Y."/>
            <person name="Shupenko C.C."/>
            <person name="Melo L.F."/>
            <person name="Strauss P.R."/>
        </authorList>
    </citation>
    <scope>NUCLEOTIDE SEQUENCE [GENOMIC DNA / MRNA]</scope>
    <scope>FUNCTION</scope>
    <scope>DEVELOPMENTAL STAGE</scope>
    <source>
        <tissue>Embryo</tissue>
    </source>
</reference>
<reference key="2">
    <citation type="journal article" date="2013" name="Nature">
        <title>The zebrafish reference genome sequence and its relationship to the human genome.</title>
        <authorList>
            <person name="Howe K."/>
            <person name="Clark M.D."/>
            <person name="Torroja C.F."/>
            <person name="Torrance J."/>
            <person name="Berthelot C."/>
            <person name="Muffato M."/>
            <person name="Collins J.E."/>
            <person name="Humphray S."/>
            <person name="McLaren K."/>
            <person name="Matthews L."/>
            <person name="McLaren S."/>
            <person name="Sealy I."/>
            <person name="Caccamo M."/>
            <person name="Churcher C."/>
            <person name="Scott C."/>
            <person name="Barrett J.C."/>
            <person name="Koch R."/>
            <person name="Rauch G.J."/>
            <person name="White S."/>
            <person name="Chow W."/>
            <person name="Kilian B."/>
            <person name="Quintais L.T."/>
            <person name="Guerra-Assuncao J.A."/>
            <person name="Zhou Y."/>
            <person name="Gu Y."/>
            <person name="Yen J."/>
            <person name="Vogel J.H."/>
            <person name="Eyre T."/>
            <person name="Redmond S."/>
            <person name="Banerjee R."/>
            <person name="Chi J."/>
            <person name="Fu B."/>
            <person name="Langley E."/>
            <person name="Maguire S.F."/>
            <person name="Laird G.K."/>
            <person name="Lloyd D."/>
            <person name="Kenyon E."/>
            <person name="Donaldson S."/>
            <person name="Sehra H."/>
            <person name="Almeida-King J."/>
            <person name="Loveland J."/>
            <person name="Trevanion S."/>
            <person name="Jones M."/>
            <person name="Quail M."/>
            <person name="Willey D."/>
            <person name="Hunt A."/>
            <person name="Burton J."/>
            <person name="Sims S."/>
            <person name="McLay K."/>
            <person name="Plumb B."/>
            <person name="Davis J."/>
            <person name="Clee C."/>
            <person name="Oliver K."/>
            <person name="Clark R."/>
            <person name="Riddle C."/>
            <person name="Elliot D."/>
            <person name="Threadgold G."/>
            <person name="Harden G."/>
            <person name="Ware D."/>
            <person name="Begum S."/>
            <person name="Mortimore B."/>
            <person name="Kerry G."/>
            <person name="Heath P."/>
            <person name="Phillimore B."/>
            <person name="Tracey A."/>
            <person name="Corby N."/>
            <person name="Dunn M."/>
            <person name="Johnson C."/>
            <person name="Wood J."/>
            <person name="Clark S."/>
            <person name="Pelan S."/>
            <person name="Griffiths G."/>
            <person name="Smith M."/>
            <person name="Glithero R."/>
            <person name="Howden P."/>
            <person name="Barker N."/>
            <person name="Lloyd C."/>
            <person name="Stevens C."/>
            <person name="Harley J."/>
            <person name="Holt K."/>
            <person name="Panagiotidis G."/>
            <person name="Lovell J."/>
            <person name="Beasley H."/>
            <person name="Henderson C."/>
            <person name="Gordon D."/>
            <person name="Auger K."/>
            <person name="Wright D."/>
            <person name="Collins J."/>
            <person name="Raisen C."/>
            <person name="Dyer L."/>
            <person name="Leung K."/>
            <person name="Robertson L."/>
            <person name="Ambridge K."/>
            <person name="Leongamornlert D."/>
            <person name="McGuire S."/>
            <person name="Gilderthorp R."/>
            <person name="Griffiths C."/>
            <person name="Manthravadi D."/>
            <person name="Nichol S."/>
            <person name="Barker G."/>
            <person name="Whitehead S."/>
            <person name="Kay M."/>
            <person name="Brown J."/>
            <person name="Murnane C."/>
            <person name="Gray E."/>
            <person name="Humphries M."/>
            <person name="Sycamore N."/>
            <person name="Barker D."/>
            <person name="Saunders D."/>
            <person name="Wallis J."/>
            <person name="Babbage A."/>
            <person name="Hammond S."/>
            <person name="Mashreghi-Mohammadi M."/>
            <person name="Barr L."/>
            <person name="Martin S."/>
            <person name="Wray P."/>
            <person name="Ellington A."/>
            <person name="Matthews N."/>
            <person name="Ellwood M."/>
            <person name="Woodmansey R."/>
            <person name="Clark G."/>
            <person name="Cooper J."/>
            <person name="Tromans A."/>
            <person name="Grafham D."/>
            <person name="Skuce C."/>
            <person name="Pandian R."/>
            <person name="Andrews R."/>
            <person name="Harrison E."/>
            <person name="Kimberley A."/>
            <person name="Garnett J."/>
            <person name="Fosker N."/>
            <person name="Hall R."/>
            <person name="Garner P."/>
            <person name="Kelly D."/>
            <person name="Bird C."/>
            <person name="Palmer S."/>
            <person name="Gehring I."/>
            <person name="Berger A."/>
            <person name="Dooley C.M."/>
            <person name="Ersan-Urun Z."/>
            <person name="Eser C."/>
            <person name="Geiger H."/>
            <person name="Geisler M."/>
            <person name="Karotki L."/>
            <person name="Kirn A."/>
            <person name="Konantz J."/>
            <person name="Konantz M."/>
            <person name="Oberlander M."/>
            <person name="Rudolph-Geiger S."/>
            <person name="Teucke M."/>
            <person name="Lanz C."/>
            <person name="Raddatz G."/>
            <person name="Osoegawa K."/>
            <person name="Zhu B."/>
            <person name="Rapp A."/>
            <person name="Widaa S."/>
            <person name="Langford C."/>
            <person name="Yang F."/>
            <person name="Schuster S.C."/>
            <person name="Carter N.P."/>
            <person name="Harrow J."/>
            <person name="Ning Z."/>
            <person name="Herrero J."/>
            <person name="Searle S.M."/>
            <person name="Enright A."/>
            <person name="Geisler R."/>
            <person name="Plasterk R.H."/>
            <person name="Lee C."/>
            <person name="Westerfield M."/>
            <person name="de Jong P.J."/>
            <person name="Zon L.I."/>
            <person name="Postlethwait J.H."/>
            <person name="Nusslein-Volhard C."/>
            <person name="Hubbard T.J."/>
            <person name="Roest Crollius H."/>
            <person name="Rogers J."/>
            <person name="Stemple D.L."/>
        </authorList>
    </citation>
    <scope>NUCLEOTIDE SEQUENCE [LARGE SCALE GENOMIC DNA]</scope>
    <source>
        <strain>Tuebingen</strain>
    </source>
</reference>
<reference key="3">
    <citation type="submission" date="2003-08" db="EMBL/GenBank/DDBJ databases">
        <authorList>
            <consortium name="NIH - Zebrafish Gene Collection (ZGC) project"/>
        </authorList>
    </citation>
    <scope>NUCLEOTIDE SEQUENCE [LARGE SCALE MRNA]</scope>
    <source>
        <tissue>Olfactory epithelium</tissue>
    </source>
</reference>
<reference key="4">
    <citation type="journal article" date="2008" name="Mutat. Res.">
        <title>Evolution of the redox function in mammalian apurinic/apyrimidinic endonuclease.</title>
        <authorList>
            <person name="Georgiadis M.M."/>
            <person name="Luo M."/>
            <person name="Gaur R.K."/>
            <person name="Delaplane S."/>
            <person name="Li X."/>
            <person name="Kelley M.R."/>
        </authorList>
    </citation>
    <scope>X-RAY CRYSTALLOGRAPHY (2.3 ANGSTROMS) OF 33-310</scope>
    <scope>FUNCTION</scope>
    <scope>MUTAGENESIS OF THR-58</scope>
</reference>
<protein>
    <recommendedName>
        <fullName>DNA repair nuclease APEX1</fullName>
        <ecNumber evidence="2">3.1.11.2</ecNumber>
        <ecNumber evidence="5">3.1.21.-</ecNumber>
    </recommendedName>
    <alternativeName>
        <fullName>APEX nuclease</fullName>
        <shortName>APEN</shortName>
    </alternativeName>
    <alternativeName>
        <fullName>Apurinic-apyrimidinic endonuclease 1</fullName>
        <shortName>AP endonuclease 1</shortName>
        <shortName>zAP1</shortName>
    </alternativeName>
</protein>
<proteinExistence type="evidence at protein level"/>
<comment type="function">
    <text evidence="2 5 6">Functions as an apurinic/apyrimidinic (AP) endodeoxyribonuclease in the DNA base excision repair (BER) pathway of DNA lesions induced by oxidative and alkylating agents (PubMed:16966376). Initiates repair of AP sites in DNA by catalyzing hydrolytic incision of the phosphodiester backbone immediately adjacent to the damage, generating a single-strand break with 5'-deoxyribose phosphate and 3'-hydroxyl ends (PubMed:16966376). Has 3'-5' exoribonuclease activity on mismatched deoxyribonucleotides at the 3' termini of nicked or gapped DNA molecules during short-patch BER (By similarity). May also play a role in the epigenetic regulation of gene expression by participating in DNA demethylation (By similarity). Required for passage through the mid-blastula transition MBT (PubMed:16966376). May also act as an endoribonuclease involved in the control of single-stranded RNA metabolism (By similarity). Has no redox activity (PubMed:18579163). Binds DNA and RNA (By similarity).</text>
</comment>
<comment type="catalytic activity">
    <reaction evidence="2">
        <text>Exonucleolytic cleavage in the 3'- to 5'-direction to yield nucleoside 5'-phosphates.</text>
        <dbReference type="EC" id="3.1.11.2"/>
    </reaction>
</comment>
<comment type="cofactor">
    <cofactor evidence="2">
        <name>Mg(2+)</name>
        <dbReference type="ChEBI" id="CHEBI:18420"/>
    </cofactor>
    <cofactor evidence="2">
        <name>Mn(2+)</name>
        <dbReference type="ChEBI" id="CHEBI:29035"/>
    </cofactor>
    <text evidence="2">Probably binds two magnesium or manganese ions per subunit.</text>
</comment>
<comment type="subcellular location">
    <subcellularLocation>
        <location evidence="3">Nucleus</location>
    </subcellularLocation>
    <subcellularLocation>
        <location evidence="1">Nucleus</location>
        <location evidence="1">Nucleolus</location>
    </subcellularLocation>
    <subcellularLocation>
        <location evidence="3">Nucleus speckle</location>
    </subcellularLocation>
    <subcellularLocation>
        <location evidence="1">Endoplasmic reticulum</location>
    </subcellularLocation>
    <subcellularLocation>
        <location evidence="3">Cytoplasm</location>
    </subcellularLocation>
    <subcellularLocation>
        <location evidence="1">Mitochondrion</location>
    </subcellularLocation>
</comment>
<comment type="developmental stage">
    <text evidence="5">Expressed in unfertilized eggs and embryos at two stages (at protein level). Expressed throughout embryogenesis.</text>
</comment>
<comment type="similarity">
    <text evidence="7">Belongs to the DNA repair enzymes AP/ExoA family.</text>
</comment>